<protein>
    <recommendedName>
        <fullName evidence="1">Nucleoid occlusion factor SlmA</fullName>
    </recommendedName>
</protein>
<accession>A8FQ72</accession>
<gene>
    <name evidence="1" type="primary">slmA</name>
    <name type="ordered locus">Ssed_0382</name>
</gene>
<comment type="function">
    <text evidence="1">Required for nucleoid occlusion (NO) phenomenon, which prevents Z-ring formation and cell division over the nucleoid. Acts as a DNA-associated cell division inhibitor that binds simultaneously chromosomal DNA and FtsZ, and disrupts the assembly of FtsZ polymers. SlmA-DNA-binding sequences (SBS) are dispersed on non-Ter regions of the chromosome, preventing FtsZ polymerization at these regions.</text>
</comment>
<comment type="subunit">
    <text evidence="1">Homodimer. Interacts with FtsZ.</text>
</comment>
<comment type="subcellular location">
    <subcellularLocation>
        <location evidence="1">Cytoplasm</location>
        <location evidence="1">Nucleoid</location>
    </subcellularLocation>
</comment>
<comment type="similarity">
    <text evidence="1">Belongs to the nucleoid occlusion factor SlmA family.</text>
</comment>
<dbReference type="EMBL" id="CP000821">
    <property type="protein sequence ID" value="ABV34995.1"/>
    <property type="molecule type" value="Genomic_DNA"/>
</dbReference>
<dbReference type="RefSeq" id="WP_012140733.1">
    <property type="nucleotide sequence ID" value="NC_009831.1"/>
</dbReference>
<dbReference type="SMR" id="A8FQ72"/>
<dbReference type="STRING" id="425104.Ssed_0382"/>
<dbReference type="KEGG" id="sse:Ssed_0382"/>
<dbReference type="eggNOG" id="COG1309">
    <property type="taxonomic scope" value="Bacteria"/>
</dbReference>
<dbReference type="HOGENOM" id="CLU_069356_5_0_6"/>
<dbReference type="OrthoDB" id="9179041at2"/>
<dbReference type="Proteomes" id="UP000002015">
    <property type="component" value="Chromosome"/>
</dbReference>
<dbReference type="GO" id="GO:0043590">
    <property type="term" value="C:bacterial nucleoid"/>
    <property type="evidence" value="ECO:0007669"/>
    <property type="project" value="UniProtKB-UniRule"/>
</dbReference>
<dbReference type="GO" id="GO:0005737">
    <property type="term" value="C:cytoplasm"/>
    <property type="evidence" value="ECO:0007669"/>
    <property type="project" value="UniProtKB-UniRule"/>
</dbReference>
<dbReference type="GO" id="GO:0043565">
    <property type="term" value="F:sequence-specific DNA binding"/>
    <property type="evidence" value="ECO:0007669"/>
    <property type="project" value="UniProtKB-UniRule"/>
</dbReference>
<dbReference type="GO" id="GO:0051301">
    <property type="term" value="P:cell division"/>
    <property type="evidence" value="ECO:0007669"/>
    <property type="project" value="UniProtKB-KW"/>
</dbReference>
<dbReference type="GO" id="GO:0010974">
    <property type="term" value="P:negative regulation of division septum assembly"/>
    <property type="evidence" value="ECO:0007669"/>
    <property type="project" value="InterPro"/>
</dbReference>
<dbReference type="Gene3D" id="1.10.357.10">
    <property type="entry name" value="Tetracycline Repressor, domain 2"/>
    <property type="match status" value="1"/>
</dbReference>
<dbReference type="HAMAP" id="MF_01839">
    <property type="entry name" value="NO_factor_SlmA"/>
    <property type="match status" value="1"/>
</dbReference>
<dbReference type="InterPro" id="IPR009057">
    <property type="entry name" value="Homeodomain-like_sf"/>
</dbReference>
<dbReference type="InterPro" id="IPR050624">
    <property type="entry name" value="HTH-type_Tx_Regulator"/>
</dbReference>
<dbReference type="InterPro" id="IPR001647">
    <property type="entry name" value="HTH_TetR"/>
</dbReference>
<dbReference type="InterPro" id="IPR023769">
    <property type="entry name" value="NO_SlmA"/>
</dbReference>
<dbReference type="InterPro" id="IPR054580">
    <property type="entry name" value="SlmA-like_C"/>
</dbReference>
<dbReference type="NCBIfam" id="NF007015">
    <property type="entry name" value="PRK09480.1"/>
    <property type="match status" value="1"/>
</dbReference>
<dbReference type="PANTHER" id="PTHR43479">
    <property type="entry name" value="ACREF/ENVCD OPERON REPRESSOR-RELATED"/>
    <property type="match status" value="1"/>
</dbReference>
<dbReference type="PANTHER" id="PTHR43479:SF11">
    <property type="entry name" value="ACREF_ENVCD OPERON REPRESSOR-RELATED"/>
    <property type="match status" value="1"/>
</dbReference>
<dbReference type="Pfam" id="PF22276">
    <property type="entry name" value="SlmA-like_C"/>
    <property type="match status" value="1"/>
</dbReference>
<dbReference type="Pfam" id="PF00440">
    <property type="entry name" value="TetR_N"/>
    <property type="match status" value="1"/>
</dbReference>
<dbReference type="SUPFAM" id="SSF46689">
    <property type="entry name" value="Homeodomain-like"/>
    <property type="match status" value="1"/>
</dbReference>
<dbReference type="PROSITE" id="PS50977">
    <property type="entry name" value="HTH_TETR_2"/>
    <property type="match status" value="1"/>
</dbReference>
<feature type="chain" id="PRO_1000088464" description="Nucleoid occlusion factor SlmA">
    <location>
        <begin position="1"/>
        <end position="197"/>
    </location>
</feature>
<feature type="domain" description="HTH tetR-type" evidence="1">
    <location>
        <begin position="7"/>
        <end position="67"/>
    </location>
</feature>
<feature type="DNA-binding region" description="H-T-H motif" evidence="1">
    <location>
        <begin position="30"/>
        <end position="49"/>
    </location>
</feature>
<evidence type="ECO:0000255" key="1">
    <source>
        <dbReference type="HAMAP-Rule" id="MF_01839"/>
    </source>
</evidence>
<sequence>MAVSPKINRREHILQCLATMLETNPGQRITTAKLAAEVGVSEAALYRHFPSKARMFEGLIDFIEESLLSRINLIMTEEKDTMKRCQLLLQLLLIFSERNPGISRVLNGDALLGENERLRSRVSLIFSKIETHLKQILREKTLREGKGFNLDEAILANLLLAIAEGRIAQFVRSEFKQKPTEHFDQQWIFIQQQLLQS</sequence>
<name>SLMA_SHESH</name>
<proteinExistence type="inferred from homology"/>
<organism>
    <name type="scientific">Shewanella sediminis (strain HAW-EB3)</name>
    <dbReference type="NCBI Taxonomy" id="425104"/>
    <lineage>
        <taxon>Bacteria</taxon>
        <taxon>Pseudomonadati</taxon>
        <taxon>Pseudomonadota</taxon>
        <taxon>Gammaproteobacteria</taxon>
        <taxon>Alteromonadales</taxon>
        <taxon>Shewanellaceae</taxon>
        <taxon>Shewanella</taxon>
    </lineage>
</organism>
<keyword id="KW-0131">Cell cycle</keyword>
<keyword id="KW-0132">Cell division</keyword>
<keyword id="KW-0963">Cytoplasm</keyword>
<keyword id="KW-0238">DNA-binding</keyword>
<keyword id="KW-1185">Reference proteome</keyword>
<reference key="1">
    <citation type="submission" date="2007-08" db="EMBL/GenBank/DDBJ databases">
        <title>Complete sequence of Shewanella sediminis HAW-EB3.</title>
        <authorList>
            <consortium name="US DOE Joint Genome Institute"/>
            <person name="Copeland A."/>
            <person name="Lucas S."/>
            <person name="Lapidus A."/>
            <person name="Barry K."/>
            <person name="Glavina del Rio T."/>
            <person name="Dalin E."/>
            <person name="Tice H."/>
            <person name="Pitluck S."/>
            <person name="Chertkov O."/>
            <person name="Brettin T."/>
            <person name="Bruce D."/>
            <person name="Detter J.C."/>
            <person name="Han C."/>
            <person name="Schmutz J."/>
            <person name="Larimer F."/>
            <person name="Land M."/>
            <person name="Hauser L."/>
            <person name="Kyrpides N."/>
            <person name="Kim E."/>
            <person name="Zhao J.-S."/>
            <person name="Richardson P."/>
        </authorList>
    </citation>
    <scope>NUCLEOTIDE SEQUENCE [LARGE SCALE GENOMIC DNA]</scope>
    <source>
        <strain>HAW-EB3</strain>
    </source>
</reference>